<comment type="function">
    <text evidence="1">Responsible for synthesis of pseudouridine from uracil-55 in the psi GC loop of transfer RNAs.</text>
</comment>
<comment type="catalytic activity">
    <reaction evidence="1">
        <text>uridine(55) in tRNA = pseudouridine(55) in tRNA</text>
        <dbReference type="Rhea" id="RHEA:42532"/>
        <dbReference type="Rhea" id="RHEA-COMP:10101"/>
        <dbReference type="Rhea" id="RHEA-COMP:10102"/>
        <dbReference type="ChEBI" id="CHEBI:65314"/>
        <dbReference type="ChEBI" id="CHEBI:65315"/>
        <dbReference type="EC" id="5.4.99.25"/>
    </reaction>
</comment>
<comment type="similarity">
    <text evidence="1">Belongs to the pseudouridine synthase TruB family. Type 1 subfamily.</text>
</comment>
<accession>Q820P2</accession>
<proteinExistence type="inferred from homology"/>
<dbReference type="EC" id="5.4.99.25" evidence="1"/>
<dbReference type="EMBL" id="AL954747">
    <property type="protein sequence ID" value="CAD84674.1"/>
    <property type="molecule type" value="Genomic_DNA"/>
</dbReference>
<dbReference type="SMR" id="Q820P2"/>
<dbReference type="STRING" id="228410.NE0763"/>
<dbReference type="KEGG" id="neu:NE0763"/>
<dbReference type="eggNOG" id="COG0130">
    <property type="taxonomic scope" value="Bacteria"/>
</dbReference>
<dbReference type="HOGENOM" id="CLU_032087_0_3_4"/>
<dbReference type="PhylomeDB" id="Q820P2"/>
<dbReference type="Proteomes" id="UP000001416">
    <property type="component" value="Chromosome"/>
</dbReference>
<dbReference type="GO" id="GO:0003723">
    <property type="term" value="F:RNA binding"/>
    <property type="evidence" value="ECO:0007669"/>
    <property type="project" value="InterPro"/>
</dbReference>
<dbReference type="GO" id="GO:0160148">
    <property type="term" value="F:tRNA pseudouridine(55) synthase activity"/>
    <property type="evidence" value="ECO:0007669"/>
    <property type="project" value="UniProtKB-EC"/>
</dbReference>
<dbReference type="GO" id="GO:1990481">
    <property type="term" value="P:mRNA pseudouridine synthesis"/>
    <property type="evidence" value="ECO:0007669"/>
    <property type="project" value="TreeGrafter"/>
</dbReference>
<dbReference type="GO" id="GO:0031119">
    <property type="term" value="P:tRNA pseudouridine synthesis"/>
    <property type="evidence" value="ECO:0007669"/>
    <property type="project" value="UniProtKB-UniRule"/>
</dbReference>
<dbReference type="CDD" id="cd02573">
    <property type="entry name" value="PseudoU_synth_EcTruB"/>
    <property type="match status" value="1"/>
</dbReference>
<dbReference type="CDD" id="cd21152">
    <property type="entry name" value="PUA_TruB_bacterial"/>
    <property type="match status" value="1"/>
</dbReference>
<dbReference type="Gene3D" id="3.30.2350.10">
    <property type="entry name" value="Pseudouridine synthase"/>
    <property type="match status" value="1"/>
</dbReference>
<dbReference type="Gene3D" id="2.30.130.10">
    <property type="entry name" value="PUA domain"/>
    <property type="match status" value="1"/>
</dbReference>
<dbReference type="HAMAP" id="MF_01080">
    <property type="entry name" value="TruB_bact"/>
    <property type="match status" value="1"/>
</dbReference>
<dbReference type="InterPro" id="IPR020103">
    <property type="entry name" value="PsdUridine_synth_cat_dom_sf"/>
</dbReference>
<dbReference type="InterPro" id="IPR002501">
    <property type="entry name" value="PsdUridine_synth_N"/>
</dbReference>
<dbReference type="InterPro" id="IPR015947">
    <property type="entry name" value="PUA-like_sf"/>
</dbReference>
<dbReference type="InterPro" id="IPR036974">
    <property type="entry name" value="PUA_sf"/>
</dbReference>
<dbReference type="InterPro" id="IPR014780">
    <property type="entry name" value="tRNA_psdUridine_synth_TruB"/>
</dbReference>
<dbReference type="InterPro" id="IPR015240">
    <property type="entry name" value="tRNA_sdUridine_synth_fam1_C"/>
</dbReference>
<dbReference type="InterPro" id="IPR032819">
    <property type="entry name" value="TruB_C"/>
</dbReference>
<dbReference type="NCBIfam" id="TIGR00431">
    <property type="entry name" value="TruB"/>
    <property type="match status" value="1"/>
</dbReference>
<dbReference type="PANTHER" id="PTHR13767:SF2">
    <property type="entry name" value="PSEUDOURIDYLATE SYNTHASE TRUB1"/>
    <property type="match status" value="1"/>
</dbReference>
<dbReference type="PANTHER" id="PTHR13767">
    <property type="entry name" value="TRNA-PSEUDOURIDINE SYNTHASE"/>
    <property type="match status" value="1"/>
</dbReference>
<dbReference type="Pfam" id="PF09157">
    <property type="entry name" value="TruB-C_2"/>
    <property type="match status" value="1"/>
</dbReference>
<dbReference type="Pfam" id="PF16198">
    <property type="entry name" value="TruB_C_2"/>
    <property type="match status" value="1"/>
</dbReference>
<dbReference type="Pfam" id="PF01509">
    <property type="entry name" value="TruB_N"/>
    <property type="match status" value="1"/>
</dbReference>
<dbReference type="SUPFAM" id="SSF55120">
    <property type="entry name" value="Pseudouridine synthase"/>
    <property type="match status" value="1"/>
</dbReference>
<dbReference type="SUPFAM" id="SSF88697">
    <property type="entry name" value="PUA domain-like"/>
    <property type="match status" value="1"/>
</dbReference>
<name>TRUB_NITEU</name>
<evidence type="ECO:0000255" key="1">
    <source>
        <dbReference type="HAMAP-Rule" id="MF_01080"/>
    </source>
</evidence>
<keyword id="KW-0413">Isomerase</keyword>
<keyword id="KW-1185">Reference proteome</keyword>
<keyword id="KW-0819">tRNA processing</keyword>
<feature type="chain" id="PRO_0000121876" description="tRNA pseudouridine synthase B">
    <location>
        <begin position="1"/>
        <end position="308"/>
    </location>
</feature>
<feature type="active site" description="Nucleophile" evidence="1">
    <location>
        <position position="33"/>
    </location>
</feature>
<gene>
    <name evidence="1" type="primary">truB</name>
    <name type="ordered locus">NE0763</name>
</gene>
<sequence length="308" mass="33497">MLNKPSGISSNRALQISKRLLSAAKAGHTGTLDPMAQGLLPICLGEATKFSSTLLGVDKTYIASLRLGYISNTGDAEGEIRQVVGSDVNPPDFGQVTGILQTFLGRSSQIPPMFSALKQHGKPLYRYAREGITVERKAREIVIHAASLDTLSGFEMTITVRCSSGTYVRTLAEDIGKALGYGGAYLTALSRISVGHFELSQACDLDQLESETPVNRQKLLCPIDSLLNDIPSIVLDDDEALRLRQGQKIRKNMSRYGLPVNTQLKLYDDRNVFLGLGERIDPEVIVPRRMISLHEVVTGAIAGSVDLQ</sequence>
<protein>
    <recommendedName>
        <fullName evidence="1">tRNA pseudouridine synthase B</fullName>
        <ecNumber evidence="1">5.4.99.25</ecNumber>
    </recommendedName>
    <alternativeName>
        <fullName evidence="1">tRNA pseudouridine(55) synthase</fullName>
        <shortName evidence="1">Psi55 synthase</shortName>
    </alternativeName>
    <alternativeName>
        <fullName evidence="1">tRNA pseudouridylate synthase</fullName>
    </alternativeName>
    <alternativeName>
        <fullName evidence="1">tRNA-uridine isomerase</fullName>
    </alternativeName>
</protein>
<organism>
    <name type="scientific">Nitrosomonas europaea (strain ATCC 19718 / CIP 103999 / KCTC 2705 / NBRC 14298)</name>
    <dbReference type="NCBI Taxonomy" id="228410"/>
    <lineage>
        <taxon>Bacteria</taxon>
        <taxon>Pseudomonadati</taxon>
        <taxon>Pseudomonadota</taxon>
        <taxon>Betaproteobacteria</taxon>
        <taxon>Nitrosomonadales</taxon>
        <taxon>Nitrosomonadaceae</taxon>
        <taxon>Nitrosomonas</taxon>
    </lineage>
</organism>
<reference key="1">
    <citation type="journal article" date="2003" name="J. Bacteriol.">
        <title>Complete genome sequence of the ammonia-oxidizing bacterium and obligate chemolithoautotroph Nitrosomonas europaea.</title>
        <authorList>
            <person name="Chain P."/>
            <person name="Lamerdin J.E."/>
            <person name="Larimer F.W."/>
            <person name="Regala W."/>
            <person name="Lao V."/>
            <person name="Land M.L."/>
            <person name="Hauser L."/>
            <person name="Hooper A.B."/>
            <person name="Klotz M.G."/>
            <person name="Norton J."/>
            <person name="Sayavedra-Soto L.A."/>
            <person name="Arciero D.M."/>
            <person name="Hommes N.G."/>
            <person name="Whittaker M.M."/>
            <person name="Arp D.J."/>
        </authorList>
    </citation>
    <scope>NUCLEOTIDE SEQUENCE [LARGE SCALE GENOMIC DNA]</scope>
    <source>
        <strain>ATCC 19718 / CIP 103999 / KCTC 2705 / NBRC 14298</strain>
    </source>
</reference>